<protein>
    <recommendedName>
        <fullName evidence="1">Phenylalanine--tRNA ligase alpha subunit</fullName>
        <ecNumber evidence="1">6.1.1.20</ecNumber>
    </recommendedName>
    <alternativeName>
        <fullName evidence="1">Phenylalanyl-tRNA synthetase alpha subunit</fullName>
        <shortName evidence="1">PheRS</shortName>
    </alternativeName>
</protein>
<proteinExistence type="inferred from homology"/>
<dbReference type="EC" id="6.1.1.20" evidence="1"/>
<dbReference type="EMBL" id="BA000033">
    <property type="protein sequence ID" value="BAB94886.1"/>
    <property type="molecule type" value="Genomic_DNA"/>
</dbReference>
<dbReference type="RefSeq" id="WP_000003566.1">
    <property type="nucleotide sequence ID" value="NC_003923.1"/>
</dbReference>
<dbReference type="SMR" id="P68850"/>
<dbReference type="KEGG" id="sam:MW1021"/>
<dbReference type="HOGENOM" id="CLU_025086_0_1_9"/>
<dbReference type="GO" id="GO:0005737">
    <property type="term" value="C:cytoplasm"/>
    <property type="evidence" value="ECO:0007669"/>
    <property type="project" value="UniProtKB-SubCell"/>
</dbReference>
<dbReference type="GO" id="GO:0005524">
    <property type="term" value="F:ATP binding"/>
    <property type="evidence" value="ECO:0007669"/>
    <property type="project" value="UniProtKB-UniRule"/>
</dbReference>
<dbReference type="GO" id="GO:0140096">
    <property type="term" value="F:catalytic activity, acting on a protein"/>
    <property type="evidence" value="ECO:0007669"/>
    <property type="project" value="UniProtKB-ARBA"/>
</dbReference>
<dbReference type="GO" id="GO:0000287">
    <property type="term" value="F:magnesium ion binding"/>
    <property type="evidence" value="ECO:0007669"/>
    <property type="project" value="UniProtKB-UniRule"/>
</dbReference>
<dbReference type="GO" id="GO:0004826">
    <property type="term" value="F:phenylalanine-tRNA ligase activity"/>
    <property type="evidence" value="ECO:0007669"/>
    <property type="project" value="UniProtKB-UniRule"/>
</dbReference>
<dbReference type="GO" id="GO:0016740">
    <property type="term" value="F:transferase activity"/>
    <property type="evidence" value="ECO:0007669"/>
    <property type="project" value="UniProtKB-ARBA"/>
</dbReference>
<dbReference type="GO" id="GO:0000049">
    <property type="term" value="F:tRNA binding"/>
    <property type="evidence" value="ECO:0007669"/>
    <property type="project" value="InterPro"/>
</dbReference>
<dbReference type="GO" id="GO:0006432">
    <property type="term" value="P:phenylalanyl-tRNA aminoacylation"/>
    <property type="evidence" value="ECO:0007669"/>
    <property type="project" value="UniProtKB-UniRule"/>
</dbReference>
<dbReference type="CDD" id="cd00496">
    <property type="entry name" value="PheRS_alpha_core"/>
    <property type="match status" value="1"/>
</dbReference>
<dbReference type="FunFam" id="3.30.930.10:FF:000003">
    <property type="entry name" value="Phenylalanine--tRNA ligase alpha subunit"/>
    <property type="match status" value="1"/>
</dbReference>
<dbReference type="Gene3D" id="3.30.930.10">
    <property type="entry name" value="Bira Bifunctional Protein, Domain 2"/>
    <property type="match status" value="1"/>
</dbReference>
<dbReference type="HAMAP" id="MF_00281">
    <property type="entry name" value="Phe_tRNA_synth_alpha1"/>
    <property type="match status" value="1"/>
</dbReference>
<dbReference type="InterPro" id="IPR006195">
    <property type="entry name" value="aa-tRNA-synth_II"/>
</dbReference>
<dbReference type="InterPro" id="IPR045864">
    <property type="entry name" value="aa-tRNA-synth_II/BPL/LPL"/>
</dbReference>
<dbReference type="InterPro" id="IPR004529">
    <property type="entry name" value="Phe-tRNA-synth_IIc_asu"/>
</dbReference>
<dbReference type="InterPro" id="IPR004188">
    <property type="entry name" value="Phe-tRNA_ligase_II_N"/>
</dbReference>
<dbReference type="InterPro" id="IPR022911">
    <property type="entry name" value="Phe_tRNA_ligase_alpha1_bac"/>
</dbReference>
<dbReference type="InterPro" id="IPR002319">
    <property type="entry name" value="Phenylalanyl-tRNA_Synthase"/>
</dbReference>
<dbReference type="InterPro" id="IPR010978">
    <property type="entry name" value="tRNA-bd_arm"/>
</dbReference>
<dbReference type="NCBIfam" id="TIGR00468">
    <property type="entry name" value="pheS"/>
    <property type="match status" value="1"/>
</dbReference>
<dbReference type="PANTHER" id="PTHR11538:SF41">
    <property type="entry name" value="PHENYLALANINE--TRNA LIGASE, MITOCHONDRIAL"/>
    <property type="match status" value="1"/>
</dbReference>
<dbReference type="PANTHER" id="PTHR11538">
    <property type="entry name" value="PHENYLALANYL-TRNA SYNTHETASE"/>
    <property type="match status" value="1"/>
</dbReference>
<dbReference type="Pfam" id="PF02912">
    <property type="entry name" value="Phe_tRNA-synt_N"/>
    <property type="match status" value="1"/>
</dbReference>
<dbReference type="Pfam" id="PF01409">
    <property type="entry name" value="tRNA-synt_2d"/>
    <property type="match status" value="1"/>
</dbReference>
<dbReference type="SUPFAM" id="SSF55681">
    <property type="entry name" value="Class II aaRS and biotin synthetases"/>
    <property type="match status" value="1"/>
</dbReference>
<dbReference type="SUPFAM" id="SSF46589">
    <property type="entry name" value="tRNA-binding arm"/>
    <property type="match status" value="1"/>
</dbReference>
<dbReference type="PROSITE" id="PS50862">
    <property type="entry name" value="AA_TRNA_LIGASE_II"/>
    <property type="match status" value="1"/>
</dbReference>
<comment type="catalytic activity">
    <reaction evidence="1">
        <text>tRNA(Phe) + L-phenylalanine + ATP = L-phenylalanyl-tRNA(Phe) + AMP + diphosphate + H(+)</text>
        <dbReference type="Rhea" id="RHEA:19413"/>
        <dbReference type="Rhea" id="RHEA-COMP:9668"/>
        <dbReference type="Rhea" id="RHEA-COMP:9699"/>
        <dbReference type="ChEBI" id="CHEBI:15378"/>
        <dbReference type="ChEBI" id="CHEBI:30616"/>
        <dbReference type="ChEBI" id="CHEBI:33019"/>
        <dbReference type="ChEBI" id="CHEBI:58095"/>
        <dbReference type="ChEBI" id="CHEBI:78442"/>
        <dbReference type="ChEBI" id="CHEBI:78531"/>
        <dbReference type="ChEBI" id="CHEBI:456215"/>
        <dbReference type="EC" id="6.1.1.20"/>
    </reaction>
</comment>
<comment type="cofactor">
    <cofactor evidence="1">
        <name>Mg(2+)</name>
        <dbReference type="ChEBI" id="CHEBI:18420"/>
    </cofactor>
    <text evidence="1">Binds 2 magnesium ions per tetramer.</text>
</comment>
<comment type="subunit">
    <text evidence="1">Tetramer of two alpha and two beta subunits.</text>
</comment>
<comment type="subcellular location">
    <subcellularLocation>
        <location evidence="1">Cytoplasm</location>
    </subcellularLocation>
</comment>
<comment type="similarity">
    <text evidence="1">Belongs to the class-II aminoacyl-tRNA synthetase family. Phe-tRNA synthetase alpha subunit type 1 subfamily.</text>
</comment>
<gene>
    <name evidence="1" type="primary">pheS</name>
    <name type="ordered locus">MW1021</name>
</gene>
<reference key="1">
    <citation type="journal article" date="2002" name="Lancet">
        <title>Genome and virulence determinants of high virulence community-acquired MRSA.</title>
        <authorList>
            <person name="Baba T."/>
            <person name="Takeuchi F."/>
            <person name="Kuroda M."/>
            <person name="Yuzawa H."/>
            <person name="Aoki K."/>
            <person name="Oguchi A."/>
            <person name="Nagai Y."/>
            <person name="Iwama N."/>
            <person name="Asano K."/>
            <person name="Naimi T."/>
            <person name="Kuroda H."/>
            <person name="Cui L."/>
            <person name="Yamamoto K."/>
            <person name="Hiramatsu K."/>
        </authorList>
    </citation>
    <scope>NUCLEOTIDE SEQUENCE [LARGE SCALE GENOMIC DNA]</scope>
    <source>
        <strain>MW2</strain>
    </source>
</reference>
<feature type="chain" id="PRO_0000126765" description="Phenylalanine--tRNA ligase alpha subunit">
    <location>
        <begin position="1"/>
        <end position="352"/>
    </location>
</feature>
<feature type="binding site" evidence="1">
    <location>
        <position position="258"/>
    </location>
    <ligand>
        <name>Mg(2+)</name>
        <dbReference type="ChEBI" id="CHEBI:18420"/>
        <note>shared with beta subunit</note>
    </ligand>
</feature>
<sequence length="352" mass="40121">MSEQQTMSELKQQALVDINEANDERALQEVKVKYLGKKGSVSGLMKLMKDLPNEEKPAFGQKVNELRQTIQNELDERQQMLVKEKLNKQLAEETIDVSLPGRHIEIGSKHPLTRTIEEIEDLFLGLGYEIVNGYEVEQDHYNFEMLNLPKSHPARDMQDSFYITDEILLRTHTSPVQARTMESRHGQGPVKIICPGKVYRRDSDDATHSHQFTQIEGLVVDKNVKMSDLKGTLELLAKKLFGADREIRLRPSYFPFTEPSVEVDVSCFKCKGKGCNVCKHTGWIEILGAGMVHPNVLEMAGFDSSEYSGFAFGMGPDRIAMLKYGIEDIRHFYTNDVRFLDQFKAVEDRGDM</sequence>
<accession>P68850</accession>
<accession>Q99QR1</accession>
<keyword id="KW-0030">Aminoacyl-tRNA synthetase</keyword>
<keyword id="KW-0067">ATP-binding</keyword>
<keyword id="KW-0963">Cytoplasm</keyword>
<keyword id="KW-0436">Ligase</keyword>
<keyword id="KW-0460">Magnesium</keyword>
<keyword id="KW-0479">Metal-binding</keyword>
<keyword id="KW-0547">Nucleotide-binding</keyword>
<keyword id="KW-0648">Protein biosynthesis</keyword>
<evidence type="ECO:0000255" key="1">
    <source>
        <dbReference type="HAMAP-Rule" id="MF_00281"/>
    </source>
</evidence>
<organism>
    <name type="scientific">Staphylococcus aureus (strain MW2)</name>
    <dbReference type="NCBI Taxonomy" id="196620"/>
    <lineage>
        <taxon>Bacteria</taxon>
        <taxon>Bacillati</taxon>
        <taxon>Bacillota</taxon>
        <taxon>Bacilli</taxon>
        <taxon>Bacillales</taxon>
        <taxon>Staphylococcaceae</taxon>
        <taxon>Staphylococcus</taxon>
    </lineage>
</organism>
<name>SYFA_STAAW</name>